<organism>
    <name type="scientific">Frankia alni (strain DSM 45986 / CECT 9034 / ACN14a)</name>
    <dbReference type="NCBI Taxonomy" id="326424"/>
    <lineage>
        <taxon>Bacteria</taxon>
        <taxon>Bacillati</taxon>
        <taxon>Actinomycetota</taxon>
        <taxon>Actinomycetes</taxon>
        <taxon>Frankiales</taxon>
        <taxon>Frankiaceae</taxon>
        <taxon>Frankia</taxon>
    </lineage>
</organism>
<keyword id="KW-0489">Methyltransferase</keyword>
<keyword id="KW-1185">Reference proteome</keyword>
<keyword id="KW-0949">S-adenosyl-L-methionine</keyword>
<keyword id="KW-0808">Transferase</keyword>
<evidence type="ECO:0000250" key="1"/>
<evidence type="ECO:0000305" key="2"/>
<protein>
    <recommendedName>
        <fullName>Putative S-adenosyl-L-methionine-dependent methyltransferase FRAAL3836</fullName>
        <ecNumber>2.1.1.-</ecNumber>
    </recommendedName>
</protein>
<name>Y3836_FRAAA</name>
<comment type="function">
    <text evidence="1">Exhibits S-adenosyl-L-methionine-dependent methyltransferase activity.</text>
</comment>
<comment type="similarity">
    <text evidence="2">Belongs to the UPF0677 family.</text>
</comment>
<sequence>MTFRAASDQIEVPAGVGLTAVGMAWVRARESARRDRLFDDPYAEAFVEAAGGPAAAGPAGAFARFIDVVDSHGVQRTRFFDDYLTRAADAGQRQFVLLAAGLDTRAHRLSWPAGTRLFEVDLPEMLTFKQAVLDTRHATARAERITVPADLAGDWSSALTRAGLRPRERTTWLVEGLLPYLDAEAAAHLLTTVGELSVPGSLLGFEYQADTWLLDELRATPELAEFATLLKGGLGESPLDWLPRHGWQVLQARLRSELAAEAGRPAPGPLADGFLVATRR</sequence>
<feature type="chain" id="PRO_0000361097" description="Putative S-adenosyl-L-methionine-dependent methyltransferase FRAAL3836">
    <location>
        <begin position="1"/>
        <end position="280"/>
    </location>
</feature>
<feature type="binding site" evidence="1">
    <location>
        <position position="121"/>
    </location>
    <ligand>
        <name>S-adenosyl-L-methionine</name>
        <dbReference type="ChEBI" id="CHEBI:59789"/>
    </ligand>
</feature>
<feature type="binding site" evidence="1">
    <location>
        <begin position="150"/>
        <end position="151"/>
    </location>
    <ligand>
        <name>S-adenosyl-L-methionine</name>
        <dbReference type="ChEBI" id="CHEBI:59789"/>
    </ligand>
</feature>
<dbReference type="EC" id="2.1.1.-"/>
<dbReference type="EMBL" id="CT573213">
    <property type="protein sequence ID" value="CAJ62479.1"/>
    <property type="molecule type" value="Genomic_DNA"/>
</dbReference>
<dbReference type="RefSeq" id="WP_011604973.1">
    <property type="nucleotide sequence ID" value="NC_008278.1"/>
</dbReference>
<dbReference type="SMR" id="Q0RJ34"/>
<dbReference type="STRING" id="326424.FRAAL3836"/>
<dbReference type="KEGG" id="fal:FRAAL3836"/>
<dbReference type="eggNOG" id="COG3315">
    <property type="taxonomic scope" value="Bacteria"/>
</dbReference>
<dbReference type="HOGENOM" id="CLU_056160_2_0_11"/>
<dbReference type="OrthoDB" id="9806164at2"/>
<dbReference type="Proteomes" id="UP000000657">
    <property type="component" value="Chromosome"/>
</dbReference>
<dbReference type="GO" id="GO:0008168">
    <property type="term" value="F:methyltransferase activity"/>
    <property type="evidence" value="ECO:0007669"/>
    <property type="project" value="UniProtKB-KW"/>
</dbReference>
<dbReference type="GO" id="GO:0032259">
    <property type="term" value="P:methylation"/>
    <property type="evidence" value="ECO:0007669"/>
    <property type="project" value="UniProtKB-KW"/>
</dbReference>
<dbReference type="Gene3D" id="3.40.50.150">
    <property type="entry name" value="Vaccinia Virus protein VP39"/>
    <property type="match status" value="1"/>
</dbReference>
<dbReference type="InterPro" id="IPR007213">
    <property type="entry name" value="Ppm1/Ppm2/Tcmp"/>
</dbReference>
<dbReference type="InterPro" id="IPR029063">
    <property type="entry name" value="SAM-dependent_MTases_sf"/>
</dbReference>
<dbReference type="InterPro" id="IPR011610">
    <property type="entry name" value="SAM_mthyl_Trfase_ML2640-like"/>
</dbReference>
<dbReference type="NCBIfam" id="TIGR00027">
    <property type="entry name" value="mthyl_TIGR00027"/>
    <property type="match status" value="1"/>
</dbReference>
<dbReference type="PANTHER" id="PTHR43619">
    <property type="entry name" value="S-ADENOSYL-L-METHIONINE-DEPENDENT METHYLTRANSFERASE YKTD-RELATED"/>
    <property type="match status" value="1"/>
</dbReference>
<dbReference type="PANTHER" id="PTHR43619:SF2">
    <property type="entry name" value="S-ADENOSYL-L-METHIONINE-DEPENDENT METHYLTRANSFERASES SUPERFAMILY PROTEIN"/>
    <property type="match status" value="1"/>
</dbReference>
<dbReference type="Pfam" id="PF04072">
    <property type="entry name" value="LCM"/>
    <property type="match status" value="1"/>
</dbReference>
<dbReference type="SUPFAM" id="SSF53335">
    <property type="entry name" value="S-adenosyl-L-methionine-dependent methyltransferases"/>
    <property type="match status" value="1"/>
</dbReference>
<reference key="1">
    <citation type="journal article" date="2007" name="Genome Res.">
        <title>Genome characteristics of facultatively symbiotic Frankia sp. strains reflect host range and host plant biogeography.</title>
        <authorList>
            <person name="Normand P."/>
            <person name="Lapierre P."/>
            <person name="Tisa L.S."/>
            <person name="Gogarten J.P."/>
            <person name="Alloisio N."/>
            <person name="Bagnarol E."/>
            <person name="Bassi C.A."/>
            <person name="Berry A.M."/>
            <person name="Bickhart D.M."/>
            <person name="Choisne N."/>
            <person name="Couloux A."/>
            <person name="Cournoyer B."/>
            <person name="Cruveiller S."/>
            <person name="Daubin V."/>
            <person name="Demange N."/>
            <person name="Francino M.P."/>
            <person name="Goltsman E."/>
            <person name="Huang Y."/>
            <person name="Kopp O.R."/>
            <person name="Labarre L."/>
            <person name="Lapidus A."/>
            <person name="Lavire C."/>
            <person name="Marechal J."/>
            <person name="Martinez M."/>
            <person name="Mastronunzio J.E."/>
            <person name="Mullin B.C."/>
            <person name="Niemann J."/>
            <person name="Pujic P."/>
            <person name="Rawnsley T."/>
            <person name="Rouy Z."/>
            <person name="Schenowitz C."/>
            <person name="Sellstedt A."/>
            <person name="Tavares F."/>
            <person name="Tomkins J.P."/>
            <person name="Vallenet D."/>
            <person name="Valverde C."/>
            <person name="Wall L.G."/>
            <person name="Wang Y."/>
            <person name="Medigue C."/>
            <person name="Benson D.R."/>
        </authorList>
    </citation>
    <scope>NUCLEOTIDE SEQUENCE [LARGE SCALE GENOMIC DNA]</scope>
    <source>
        <strain>DSM 45986 / CECT 9034 / ACN14a</strain>
    </source>
</reference>
<gene>
    <name type="ordered locus">FRAAL3836</name>
</gene>
<proteinExistence type="inferred from homology"/>
<accession>Q0RJ34</accession>